<reference key="1">
    <citation type="journal article" date="1992" name="J. Bacteriol.">
        <title>Physical map location of the new Escherichia coli gene sbm.</title>
        <authorList>
            <person name="Roy I."/>
            <person name="Leadlay P.F."/>
        </authorList>
    </citation>
    <scope>NUCLEOTIDE SEQUENCE [GENOMIC DNA]</scope>
    <source>
        <strain>K12</strain>
    </source>
</reference>
<reference key="2">
    <citation type="journal article" date="1997" name="Science">
        <title>The complete genome sequence of Escherichia coli K-12.</title>
        <authorList>
            <person name="Blattner F.R."/>
            <person name="Plunkett G. III"/>
            <person name="Bloch C.A."/>
            <person name="Perna N.T."/>
            <person name="Burland V."/>
            <person name="Riley M."/>
            <person name="Collado-Vides J."/>
            <person name="Glasner J.D."/>
            <person name="Rode C.K."/>
            <person name="Mayhew G.F."/>
            <person name="Gregor J."/>
            <person name="Davis N.W."/>
            <person name="Kirkpatrick H.A."/>
            <person name="Goeden M.A."/>
            <person name="Rose D.J."/>
            <person name="Mau B."/>
            <person name="Shao Y."/>
        </authorList>
    </citation>
    <scope>NUCLEOTIDE SEQUENCE [LARGE SCALE GENOMIC DNA]</scope>
    <source>
        <strain>K12 / MG1655 / ATCC 47076</strain>
    </source>
</reference>
<reference key="3">
    <citation type="journal article" date="2006" name="Mol. Syst. Biol.">
        <title>Highly accurate genome sequences of Escherichia coli K-12 strains MG1655 and W3110.</title>
        <authorList>
            <person name="Hayashi K."/>
            <person name="Morooka N."/>
            <person name="Yamamoto Y."/>
            <person name="Fujita K."/>
            <person name="Isono K."/>
            <person name="Choi S."/>
            <person name="Ohtsubo E."/>
            <person name="Baba T."/>
            <person name="Wanner B.L."/>
            <person name="Mori H."/>
            <person name="Horiuchi T."/>
        </authorList>
    </citation>
    <scope>NUCLEOTIDE SEQUENCE [LARGE SCALE GENOMIC DNA]</scope>
    <source>
        <strain>K12 / W3110 / ATCC 27325 / DSM 5911</strain>
    </source>
</reference>
<reference key="4">
    <citation type="journal article" date="2000" name="Biochemistry">
        <title>Discovering new enzymes and metabolic pathways: conversion of succinate to propionate by Escherichia coli.</title>
        <authorList>
            <person name="Haller T."/>
            <person name="Buckel T."/>
            <person name="Retey J."/>
            <person name="Gerlt J.A."/>
        </authorList>
    </citation>
    <scope>FUNCTION</scope>
    <scope>CATALYTIC ACTIVITY</scope>
    <scope>COFACTOR</scope>
    <source>
        <strain>K12 / MG1655 / ATCC 47076</strain>
    </source>
</reference>
<reference key="5">
    <citation type="journal article" date="2002" name="Biochemistry">
        <title>Metabolic engineering of a methylmalonyl-CoA mutase-epimerase pathway for complex polyketide biosynthesis in Escherichia coli.</title>
        <authorList>
            <person name="Dayem L.C."/>
            <person name="Carney J.R."/>
            <person name="Santi D.V."/>
            <person name="Pfeifer B.A."/>
            <person name="Khosla C."/>
            <person name="Kealey J.T."/>
        </authorList>
    </citation>
    <scope>FUNCTION</scope>
    <scope>CATALYTIC ACTIVITY</scope>
    <scope>COFACTOR</scope>
</reference>
<reference key="6">
    <citation type="journal article" date="2009" name="Microbiol. Res.">
        <title>Sleeping beauty mutase (sbm) is expressed and interacts with ygfd in Escherichia coli.</title>
        <authorList>
            <person name="Froese D.S."/>
            <person name="Dobson C.M."/>
            <person name="White A.P."/>
            <person name="Wu X."/>
            <person name="Padovani D."/>
            <person name="Banerjee R."/>
            <person name="Haller T."/>
            <person name="Gerlt J.A."/>
            <person name="Surette M.G."/>
            <person name="Gravel R.A."/>
        </authorList>
    </citation>
    <scope>SUBUNIT</scope>
    <scope>INTERACTION WITH ARGK</scope>
</reference>
<keyword id="KW-0846">Cobalamin</keyword>
<keyword id="KW-0170">Cobalt</keyword>
<keyword id="KW-0413">Isomerase</keyword>
<keyword id="KW-0479">Metal-binding</keyword>
<keyword id="KW-1185">Reference proteome</keyword>
<feature type="chain" id="PRO_0000194277" description="Methylmalonyl-CoA mutase">
    <location>
        <begin position="1"/>
        <end position="714"/>
    </location>
</feature>
<feature type="domain" description="B12-binding" evidence="2">
    <location>
        <begin position="584"/>
        <end position="714"/>
    </location>
</feature>
<feature type="binding site" description="axial binding residue" evidence="1">
    <location>
        <position position="597"/>
    </location>
    <ligand>
        <name>adenosylcob(III)alamin</name>
        <dbReference type="ChEBI" id="CHEBI:18408"/>
    </ligand>
    <ligandPart>
        <name>Co</name>
        <dbReference type="ChEBI" id="CHEBI:27638"/>
    </ligandPart>
</feature>
<feature type="sequence conflict" description="In Ref. 1; CAA47311." evidence="6" ref="1">
    <original>A</original>
    <variation>V</variation>
    <location>
        <position position="356"/>
    </location>
</feature>
<organism>
    <name type="scientific">Escherichia coli (strain K12)</name>
    <dbReference type="NCBI Taxonomy" id="83333"/>
    <lineage>
        <taxon>Bacteria</taxon>
        <taxon>Pseudomonadati</taxon>
        <taxon>Pseudomonadota</taxon>
        <taxon>Gammaproteobacteria</taxon>
        <taxon>Enterobacterales</taxon>
        <taxon>Enterobacteriaceae</taxon>
        <taxon>Escherichia</taxon>
    </lineage>
</organism>
<evidence type="ECO:0000250" key="1"/>
<evidence type="ECO:0000255" key="2">
    <source>
        <dbReference type="PROSITE-ProRule" id="PRU00666"/>
    </source>
</evidence>
<evidence type="ECO:0000269" key="3">
    <source>
    </source>
</evidence>
<evidence type="ECO:0000269" key="4">
    <source>
    </source>
</evidence>
<evidence type="ECO:0000269" key="5">
    <source>
    </source>
</evidence>
<evidence type="ECO:0000305" key="6"/>
<dbReference type="EC" id="5.4.99.2"/>
<dbReference type="EMBL" id="X66836">
    <property type="protein sequence ID" value="CAA47311.1"/>
    <property type="molecule type" value="Genomic_DNA"/>
</dbReference>
<dbReference type="EMBL" id="U28377">
    <property type="protein sequence ID" value="AAA69084.1"/>
    <property type="molecule type" value="Genomic_DNA"/>
</dbReference>
<dbReference type="EMBL" id="U00096">
    <property type="protein sequence ID" value="AAC75954.1"/>
    <property type="molecule type" value="Genomic_DNA"/>
</dbReference>
<dbReference type="EMBL" id="AP009048">
    <property type="protein sequence ID" value="BAE76981.1"/>
    <property type="molecule type" value="Genomic_DNA"/>
</dbReference>
<dbReference type="PIR" id="D65076">
    <property type="entry name" value="D65076"/>
</dbReference>
<dbReference type="RefSeq" id="NP_417392.1">
    <property type="nucleotide sequence ID" value="NC_000913.3"/>
</dbReference>
<dbReference type="RefSeq" id="WP_000073223.1">
    <property type="nucleotide sequence ID" value="NZ_SSZK01000003.1"/>
</dbReference>
<dbReference type="RefSeq" id="WP_000073228.1">
    <property type="nucleotide sequence ID" value="NZ_CP047127.1"/>
</dbReference>
<dbReference type="SMR" id="P27253"/>
<dbReference type="BioGRID" id="4262330">
    <property type="interactions" value="32"/>
</dbReference>
<dbReference type="FunCoup" id="P27253">
    <property type="interactions" value="684"/>
</dbReference>
<dbReference type="IntAct" id="P27253">
    <property type="interactions" value="6"/>
</dbReference>
<dbReference type="STRING" id="511145.b2917"/>
<dbReference type="SwissLipids" id="SLP:000001257"/>
<dbReference type="PaxDb" id="511145-b2917"/>
<dbReference type="EnsemblBacteria" id="AAC75954">
    <property type="protein sequence ID" value="AAC75954"/>
    <property type="gene ID" value="b2917"/>
</dbReference>
<dbReference type="GeneID" id="945576"/>
<dbReference type="KEGG" id="ecj:JW2884"/>
<dbReference type="KEGG" id="eco:b2917"/>
<dbReference type="KEGG" id="ecoc:C3026_15985"/>
<dbReference type="PATRIC" id="fig|1411691.4.peg.3815"/>
<dbReference type="EchoBASE" id="EB1414"/>
<dbReference type="eggNOG" id="COG1884">
    <property type="taxonomic scope" value="Bacteria"/>
</dbReference>
<dbReference type="eggNOG" id="COG2185">
    <property type="taxonomic scope" value="Bacteria"/>
</dbReference>
<dbReference type="HOGENOM" id="CLU_009523_3_1_6"/>
<dbReference type="InParanoid" id="P27253"/>
<dbReference type="OMA" id="IQEETHI"/>
<dbReference type="OrthoDB" id="9762378at2"/>
<dbReference type="PhylomeDB" id="P27253"/>
<dbReference type="BioCyc" id="EcoCyc:METHYLMALONYL-COA-MUT-MONOMER"/>
<dbReference type="BioCyc" id="MetaCyc:METHYLMALONYL-COA-MUT-MONOMER"/>
<dbReference type="PRO" id="PR:P27253"/>
<dbReference type="Proteomes" id="UP000000625">
    <property type="component" value="Chromosome"/>
</dbReference>
<dbReference type="GO" id="GO:0005737">
    <property type="term" value="C:cytoplasm"/>
    <property type="evidence" value="ECO:0000318"/>
    <property type="project" value="GO_Central"/>
</dbReference>
<dbReference type="GO" id="GO:0031419">
    <property type="term" value="F:cobalamin binding"/>
    <property type="evidence" value="ECO:0000314"/>
    <property type="project" value="EcoCyc"/>
</dbReference>
<dbReference type="GO" id="GO:0046872">
    <property type="term" value="F:metal ion binding"/>
    <property type="evidence" value="ECO:0007669"/>
    <property type="project" value="UniProtKB-KW"/>
</dbReference>
<dbReference type="GO" id="GO:0004494">
    <property type="term" value="F:methylmalonyl-CoA mutase activity"/>
    <property type="evidence" value="ECO:0000314"/>
    <property type="project" value="EcoCyc"/>
</dbReference>
<dbReference type="GO" id="GO:0019678">
    <property type="term" value="P:propionate metabolic process, methylmalonyl pathway"/>
    <property type="evidence" value="ECO:0000318"/>
    <property type="project" value="GO_Central"/>
</dbReference>
<dbReference type="CDD" id="cd02071">
    <property type="entry name" value="MM_CoA_mut_B12_BD"/>
    <property type="match status" value="1"/>
</dbReference>
<dbReference type="CDD" id="cd03679">
    <property type="entry name" value="MM_CoA_mutase_alpha_like"/>
    <property type="match status" value="1"/>
</dbReference>
<dbReference type="FunFam" id="3.40.50.280:FF:000002">
    <property type="entry name" value="Methylmalonyl-CoA mutase, mitochondrial"/>
    <property type="match status" value="1"/>
</dbReference>
<dbReference type="FunFam" id="3.20.20.240:FF:000001">
    <property type="entry name" value="Probable methylmalonyl-coa mutase"/>
    <property type="match status" value="1"/>
</dbReference>
<dbReference type="Gene3D" id="3.40.50.280">
    <property type="entry name" value="Cobalamin-binding domain"/>
    <property type="match status" value="1"/>
</dbReference>
<dbReference type="Gene3D" id="3.20.20.240">
    <property type="entry name" value="Methylmalonyl-CoA mutase"/>
    <property type="match status" value="1"/>
</dbReference>
<dbReference type="InterPro" id="IPR006159">
    <property type="entry name" value="Acid_CoA_mut_C"/>
</dbReference>
<dbReference type="InterPro" id="IPR016176">
    <property type="entry name" value="Cbl-dep_enz_cat"/>
</dbReference>
<dbReference type="InterPro" id="IPR006158">
    <property type="entry name" value="Cobalamin-bd"/>
</dbReference>
<dbReference type="InterPro" id="IPR036724">
    <property type="entry name" value="Cobalamin-bd_sf"/>
</dbReference>
<dbReference type="InterPro" id="IPR006099">
    <property type="entry name" value="MeMalonylCoA_mutase_a/b_cat"/>
</dbReference>
<dbReference type="InterPro" id="IPR006098">
    <property type="entry name" value="MMCoA_mutase_a_cat"/>
</dbReference>
<dbReference type="NCBIfam" id="TIGR00640">
    <property type="entry name" value="acid_CoA_mut_C"/>
    <property type="match status" value="1"/>
</dbReference>
<dbReference type="NCBIfam" id="TIGR00641">
    <property type="entry name" value="acid_CoA_mut_N"/>
    <property type="match status" value="1"/>
</dbReference>
<dbReference type="NCBIfam" id="NF006944">
    <property type="entry name" value="PRK09426.1"/>
    <property type="match status" value="1"/>
</dbReference>
<dbReference type="PANTHER" id="PTHR48101:SF4">
    <property type="entry name" value="METHYLMALONYL-COA MUTASE, MITOCHONDRIAL"/>
    <property type="match status" value="1"/>
</dbReference>
<dbReference type="PANTHER" id="PTHR48101">
    <property type="entry name" value="METHYLMALONYL-COA MUTASE, MITOCHONDRIAL-RELATED"/>
    <property type="match status" value="1"/>
</dbReference>
<dbReference type="Pfam" id="PF02310">
    <property type="entry name" value="B12-binding"/>
    <property type="match status" value="1"/>
</dbReference>
<dbReference type="Pfam" id="PF01642">
    <property type="entry name" value="MM_CoA_mutase"/>
    <property type="match status" value="1"/>
</dbReference>
<dbReference type="SUPFAM" id="SSF52242">
    <property type="entry name" value="Cobalamin (vitamin B12)-binding domain"/>
    <property type="match status" value="1"/>
</dbReference>
<dbReference type="SUPFAM" id="SSF51703">
    <property type="entry name" value="Cobalamin (vitamin B12)-dependent enzymes"/>
    <property type="match status" value="1"/>
</dbReference>
<dbReference type="PROSITE" id="PS51332">
    <property type="entry name" value="B12_BINDING"/>
    <property type="match status" value="1"/>
</dbReference>
<dbReference type="PROSITE" id="PS00544">
    <property type="entry name" value="METMALONYL_COA_MUTASE"/>
    <property type="match status" value="1"/>
</dbReference>
<sequence>MSNVQEWQQLANKELSRREKTVDSLVHQTAEGIAIKPLYTEADLDNLEVTGTLPGLPPYVRGPRATMYTAQPWTIRQYAGFSTAKESNAFYRRNLAAGQKGLSVAFDLATHRGYDSDNPRVAGDVGKAGVAIDTVEDMKVLFDQIPLDKMSVSMTMNGAVLPVLAFYIVAAEEQGVTPDKLTGTIQNDILKEYLCRNTYIYPPKPSMRIIADIIAWCSGNMPRFNTISISGYHMGEAGANCVQQVAFTLADGIEYIKAAISAGLKIDDFAPRLSFFFGIGMDLFMNVAMLRAARYLWSEAVSGFGAQDPKSLALRTHCQTSGWSLTEQDPYNNVIRTTIEALAATLGGTQSLHTNAFDEALGLPTDFSARIARNTQIIIQEESELCRTVDPLAGSYYIESLTDQIVKQARAIIQQIDEAGGMAKAIEAGLPKRMIEEASAREQSLIDQGKRVIVGVNKYKLDHEDETDVLEIDNVMVRNEQIASLERIRATRDDAAVTAALNALTHAAQHNENLLAAAVNAARVRATLGEISDALEVAFDRYLVPSQCVTGVIAQSYHQSEKSASEFDAIVAQTEQFLADNGRRPRILIAKMGQDGHDRGAKVIASAYSDLGFDVDLSPMFSTPEEIARLAVENDVHVVGASSLAAGHKTLIPELVEALKKWGREDICVVAGGVIPPQDYAFLQERGVAAIYGPGTPMLDSVRDVLNLISQHHD</sequence>
<protein>
    <recommendedName>
        <fullName>Methylmalonyl-CoA mutase</fullName>
        <shortName>MCM</shortName>
        <ecNumber>5.4.99.2</ecNumber>
    </recommendedName>
</protein>
<name>SCPA_ECOLI</name>
<proteinExistence type="evidence at protein level"/>
<comment type="function">
    <text evidence="3 4">Catalyzes the interconversion of succinyl-CoA and methylmalonyl-CoA. Could be part of a pathway that converts succinate to propionate.</text>
</comment>
<comment type="catalytic activity">
    <reaction evidence="3 4">
        <text>(R)-methylmalonyl-CoA = succinyl-CoA</text>
        <dbReference type="Rhea" id="RHEA:22888"/>
        <dbReference type="ChEBI" id="CHEBI:57292"/>
        <dbReference type="ChEBI" id="CHEBI:57326"/>
        <dbReference type="EC" id="5.4.99.2"/>
    </reaction>
</comment>
<comment type="cofactor">
    <cofactor evidence="3 4">
        <name>adenosylcob(III)alamin</name>
        <dbReference type="ChEBI" id="CHEBI:18408"/>
    </cofactor>
</comment>
<comment type="subunit">
    <text evidence="5">Homodimer. Interacts with ArgK.</text>
</comment>
<comment type="similarity">
    <text evidence="6">Belongs to the methylmalonyl-CoA mutase family.</text>
</comment>
<accession>P27253</accession>
<accession>Q2M9S5</accession>
<gene>
    <name type="primary">scpA</name>
    <name type="synonym">sbm</name>
    <name type="synonym">yliK</name>
    <name type="ordered locus">b2917</name>
    <name type="ordered locus">JW2884</name>
</gene>